<keyword id="KW-0025">Alternative splicing</keyword>
<keyword id="KW-0091">Biomineralization</keyword>
<keyword id="KW-0272">Extracellular matrix</keyword>
<keyword id="KW-0597">Phosphoprotein</keyword>
<keyword id="KW-1185">Reference proteome</keyword>
<keyword id="KW-0677">Repeat</keyword>
<keyword id="KW-0964">Secreted</keyword>
<keyword id="KW-0732">Signal</keyword>
<protein>
    <recommendedName>
        <fullName>Amelogenin, X isoform</fullName>
    </recommendedName>
    <alternativeName>
        <fullName>Leucine-rich amelogenin peptide</fullName>
        <shortName>LRAP</shortName>
    </alternativeName>
</protein>
<gene>
    <name type="primary">Amelx</name>
    <name type="synonym">Amel</name>
</gene>
<organism>
    <name type="scientific">Mus musculus</name>
    <name type="common">Mouse</name>
    <dbReference type="NCBI Taxonomy" id="10090"/>
    <lineage>
        <taxon>Eukaryota</taxon>
        <taxon>Metazoa</taxon>
        <taxon>Chordata</taxon>
        <taxon>Craniata</taxon>
        <taxon>Vertebrata</taxon>
        <taxon>Euteleostomi</taxon>
        <taxon>Mammalia</taxon>
        <taxon>Eutheria</taxon>
        <taxon>Euarchontoglires</taxon>
        <taxon>Glires</taxon>
        <taxon>Rodentia</taxon>
        <taxon>Myomorpha</taxon>
        <taxon>Muroidea</taxon>
        <taxon>Muridae</taxon>
        <taxon>Murinae</taxon>
        <taxon>Mus</taxon>
        <taxon>Mus</taxon>
    </lineage>
</organism>
<accession>P63277</accession>
<accession>A2ALX2</accession>
<accession>A2ALX3</accession>
<accession>P45559</accession>
<accession>P70592</accession>
<accession>Q61293</accession>
<proteinExistence type="evidence at protein level"/>
<sequence>MGTWILFACLLGAAFAMPLPPHPGSPGYINLSYEKSHSQAINTDRTALVLTPLKWYQSMIRQPYPSYGYEPMGGWLHHQIIPVLSQQHPPSHTLQPHHHLPVVPAQQPVAPQQPMMPVPGHHSMTPTQHHQPNIPPSAQQPFQQPFQPQAIPPQSHQPMQPQSPLHPMQPLAPQPPLPPLFSMQPLSPILPELPLEAWPATDKTKREEVD</sequence>
<evidence type="ECO:0000250" key="1"/>
<evidence type="ECO:0000250" key="2">
    <source>
        <dbReference type="UniProtKB" id="P02817"/>
    </source>
</evidence>
<evidence type="ECO:0000250" key="3">
    <source>
        <dbReference type="UniProtKB" id="Q99217"/>
    </source>
</evidence>
<evidence type="ECO:0000256" key="4">
    <source>
        <dbReference type="SAM" id="MobiDB-lite"/>
    </source>
</evidence>
<evidence type="ECO:0000269" key="5">
    <source>
    </source>
</evidence>
<evidence type="ECO:0000303" key="6">
    <source>
    </source>
</evidence>
<evidence type="ECO:0000305" key="7"/>
<dbReference type="EMBL" id="D31768">
    <property type="protein sequence ID" value="BAA06546.1"/>
    <property type="molecule type" value="mRNA"/>
</dbReference>
<dbReference type="EMBL" id="D31769">
    <property type="protein sequence ID" value="BAA06547.1"/>
    <property type="molecule type" value="mRNA"/>
</dbReference>
<dbReference type="EMBL" id="D83067">
    <property type="protein sequence ID" value="BAA23665.1"/>
    <property type="molecule type" value="Genomic_DNA"/>
</dbReference>
<dbReference type="EMBL" id="AK029358">
    <property type="protein sequence ID" value="BAC26415.1"/>
    <property type="molecule type" value="mRNA"/>
</dbReference>
<dbReference type="EMBL" id="AL805974">
    <property type="status" value="NOT_ANNOTATED_CDS"/>
    <property type="molecule type" value="Genomic_DNA"/>
</dbReference>
<dbReference type="EMBL" id="M10095">
    <property type="protein sequence ID" value="AAA37218.1"/>
    <property type="molecule type" value="mRNA"/>
</dbReference>
<dbReference type="CCDS" id="CCDS41214.1">
    <molecule id="P63277-1"/>
</dbReference>
<dbReference type="CCDS" id="CCDS81197.1">
    <molecule id="P63277-3"/>
</dbReference>
<dbReference type="PIR" id="I49486">
    <property type="entry name" value="I49486"/>
</dbReference>
<dbReference type="PIR" id="PC1148">
    <property type="entry name" value="PC1148"/>
</dbReference>
<dbReference type="RefSeq" id="NP_001075447.1">
    <property type="nucleotide sequence ID" value="NM_001081978.2"/>
</dbReference>
<dbReference type="RefSeq" id="NP_001277300.1">
    <molecule id="P63277-3"/>
    <property type="nucleotide sequence ID" value="NM_001290371.1"/>
</dbReference>
<dbReference type="RefSeq" id="NP_001402919.1">
    <molecule id="P63277-4"/>
    <property type="nucleotide sequence ID" value="NM_001415990.1"/>
</dbReference>
<dbReference type="RefSeq" id="NP_033796.1">
    <molecule id="P63277-1"/>
    <property type="nucleotide sequence ID" value="NM_009666.4"/>
</dbReference>
<dbReference type="DIP" id="DIP-59703N"/>
<dbReference type="FunCoup" id="P63277">
    <property type="interactions" value="15"/>
</dbReference>
<dbReference type="STRING" id="10090.ENSMUSP00000065966"/>
<dbReference type="iPTMnet" id="P63277"/>
<dbReference type="PhosphoSitePlus" id="P63277"/>
<dbReference type="PaxDb" id="10090-ENSMUSP00000065966"/>
<dbReference type="ProteomicsDB" id="296104">
    <molecule id="P63277-4"/>
</dbReference>
<dbReference type="Antibodypedia" id="23742">
    <property type="antibodies" value="164 antibodies from 21 providers"/>
</dbReference>
<dbReference type="DNASU" id="11704"/>
<dbReference type="Ensembl" id="ENSMUST00000112118.8">
    <molecule id="P63277-1"/>
    <property type="protein sequence ID" value="ENSMUSP00000107746.2"/>
    <property type="gene ID" value="ENSMUSG00000031354.17"/>
</dbReference>
<dbReference type="Ensembl" id="ENSMUST00000112119.8">
    <molecule id="P63277-4"/>
    <property type="protein sequence ID" value="ENSMUSP00000107747.2"/>
    <property type="gene ID" value="ENSMUSG00000031354.17"/>
</dbReference>
<dbReference type="Ensembl" id="ENSMUST00000112120.8">
    <molecule id="P63277-3"/>
    <property type="protein sequence ID" value="ENSMUSP00000107748.2"/>
    <property type="gene ID" value="ENSMUSG00000031354.17"/>
</dbReference>
<dbReference type="GeneID" id="11704"/>
<dbReference type="KEGG" id="mmu:11704"/>
<dbReference type="UCSC" id="uc009uxs.2">
    <molecule id="P63277-1"/>
    <property type="organism name" value="mouse"/>
</dbReference>
<dbReference type="UCSC" id="uc009uxu.1">
    <molecule id="P63277-4"/>
    <property type="organism name" value="mouse"/>
</dbReference>
<dbReference type="AGR" id="MGI:88005"/>
<dbReference type="CTD" id="265"/>
<dbReference type="MGI" id="MGI:88005">
    <property type="gene designation" value="Amelx"/>
</dbReference>
<dbReference type="VEuPathDB" id="HostDB:ENSMUSG00000031354"/>
<dbReference type="eggNOG" id="ENOG502S4XP">
    <property type="taxonomic scope" value="Eukaryota"/>
</dbReference>
<dbReference type="GeneTree" id="ENSGT00390000009151"/>
<dbReference type="HOGENOM" id="CLU_120753_0_0_1"/>
<dbReference type="InParanoid" id="P63277"/>
<dbReference type="OrthoDB" id="9030267at2759"/>
<dbReference type="Reactome" id="R-MMU-381426">
    <property type="pathway name" value="Regulation of Insulin-like Growth Factor (IGF) transport and uptake by Insulin-like Growth Factor Binding Proteins (IGFBPs)"/>
</dbReference>
<dbReference type="Reactome" id="R-MMU-8957275">
    <property type="pathway name" value="Post-translational protein phosphorylation"/>
</dbReference>
<dbReference type="BioGRID-ORCS" id="11704">
    <property type="hits" value="2 hits in 76 CRISPR screens"/>
</dbReference>
<dbReference type="ChiTaRS" id="Amelx">
    <property type="organism name" value="mouse"/>
</dbReference>
<dbReference type="PRO" id="PR:P63277"/>
<dbReference type="Proteomes" id="UP000000589">
    <property type="component" value="Chromosome X"/>
</dbReference>
<dbReference type="RNAct" id="P63277">
    <property type="molecule type" value="protein"/>
</dbReference>
<dbReference type="Bgee" id="ENSMUSG00000031354">
    <property type="expression patterns" value="Expressed in molar tooth and 27 other cell types or tissues"/>
</dbReference>
<dbReference type="ExpressionAtlas" id="P63277">
    <property type="expression patterns" value="baseline and differential"/>
</dbReference>
<dbReference type="GO" id="GO:0005604">
    <property type="term" value="C:basement membrane"/>
    <property type="evidence" value="ECO:0000314"/>
    <property type="project" value="MGI"/>
</dbReference>
<dbReference type="GO" id="GO:0009986">
    <property type="term" value="C:cell surface"/>
    <property type="evidence" value="ECO:0000315"/>
    <property type="project" value="BHF-UCL"/>
</dbReference>
<dbReference type="GO" id="GO:0030139">
    <property type="term" value="C:endocytic vesicle"/>
    <property type="evidence" value="ECO:0007669"/>
    <property type="project" value="Ensembl"/>
</dbReference>
<dbReference type="GO" id="GO:0005576">
    <property type="term" value="C:extracellular region"/>
    <property type="evidence" value="ECO:0007669"/>
    <property type="project" value="UniProtKB-KW"/>
</dbReference>
<dbReference type="GO" id="GO:0032991">
    <property type="term" value="C:protein-containing complex"/>
    <property type="evidence" value="ECO:0000314"/>
    <property type="project" value="CAFA"/>
</dbReference>
<dbReference type="GO" id="GO:0099080">
    <property type="term" value="C:supramolecular complex"/>
    <property type="evidence" value="ECO:0000314"/>
    <property type="project" value="CAFA"/>
</dbReference>
<dbReference type="GO" id="GO:0005509">
    <property type="term" value="F:calcium ion binding"/>
    <property type="evidence" value="ECO:0000314"/>
    <property type="project" value="CAFA"/>
</dbReference>
<dbReference type="GO" id="GO:0008083">
    <property type="term" value="F:growth factor activity"/>
    <property type="evidence" value="ECO:0000315"/>
    <property type="project" value="BHF-UCL"/>
</dbReference>
<dbReference type="GO" id="GO:0046848">
    <property type="term" value="F:hydroxyapatite binding"/>
    <property type="evidence" value="ECO:0000314"/>
    <property type="project" value="BHF-UCL"/>
</dbReference>
<dbReference type="GO" id="GO:0042802">
    <property type="term" value="F:identical protein binding"/>
    <property type="evidence" value="ECO:0000314"/>
    <property type="project" value="MGI"/>
</dbReference>
<dbReference type="GO" id="GO:0042803">
    <property type="term" value="F:protein homodimerization activity"/>
    <property type="evidence" value="ECO:0000314"/>
    <property type="project" value="CAFA"/>
</dbReference>
<dbReference type="GO" id="GO:0031402">
    <property type="term" value="F:sodium ion binding"/>
    <property type="evidence" value="ECO:0000314"/>
    <property type="project" value="CAFA"/>
</dbReference>
<dbReference type="GO" id="GO:0030345">
    <property type="term" value="F:structural constituent of tooth enamel"/>
    <property type="evidence" value="ECO:0007669"/>
    <property type="project" value="Ensembl"/>
</dbReference>
<dbReference type="GO" id="GO:0097186">
    <property type="term" value="P:amelogenesis"/>
    <property type="evidence" value="ECO:0000314"/>
    <property type="project" value="ARUK-UCL"/>
</dbReference>
<dbReference type="GO" id="GO:0007155">
    <property type="term" value="P:cell adhesion"/>
    <property type="evidence" value="ECO:0000315"/>
    <property type="project" value="BHF-UCL"/>
</dbReference>
<dbReference type="GO" id="GO:0070166">
    <property type="term" value="P:enamel mineralization"/>
    <property type="evidence" value="ECO:0000314"/>
    <property type="project" value="ARUK-UCL"/>
</dbReference>
<dbReference type="GO" id="GO:0042475">
    <property type="term" value="P:odontogenesis of dentin-containing tooth"/>
    <property type="evidence" value="ECO:0000270"/>
    <property type="project" value="BHF-UCL"/>
</dbReference>
<dbReference type="GO" id="GO:0042127">
    <property type="term" value="P:regulation of cell population proliferation"/>
    <property type="evidence" value="ECO:0000315"/>
    <property type="project" value="BHF-UCL"/>
</dbReference>
<dbReference type="GO" id="GO:0051592">
    <property type="term" value="P:response to calcium ion"/>
    <property type="evidence" value="ECO:0007669"/>
    <property type="project" value="Ensembl"/>
</dbReference>
<dbReference type="GO" id="GO:0007584">
    <property type="term" value="P:response to nutrient"/>
    <property type="evidence" value="ECO:0007669"/>
    <property type="project" value="Ensembl"/>
</dbReference>
<dbReference type="GO" id="GO:0009410">
    <property type="term" value="P:response to xenobiotic stimulus"/>
    <property type="evidence" value="ECO:0007669"/>
    <property type="project" value="Ensembl"/>
</dbReference>
<dbReference type="GO" id="GO:0007165">
    <property type="term" value="P:signal transduction"/>
    <property type="evidence" value="ECO:0000304"/>
    <property type="project" value="BHF-UCL"/>
</dbReference>
<dbReference type="GO" id="GO:0034505">
    <property type="term" value="P:tooth mineralization"/>
    <property type="evidence" value="ECO:0000315"/>
    <property type="project" value="BHF-UCL"/>
</dbReference>
<dbReference type="InterPro" id="IPR004116">
    <property type="entry name" value="Amelogenin"/>
</dbReference>
<dbReference type="PANTHER" id="PTHR46794:SF2">
    <property type="entry name" value="AMELOGENIN, X ISOFORM"/>
    <property type="match status" value="1"/>
</dbReference>
<dbReference type="PANTHER" id="PTHR46794">
    <property type="entry name" value="AMELOGENIN, Y ISOFORM"/>
    <property type="match status" value="1"/>
</dbReference>
<dbReference type="Pfam" id="PF02948">
    <property type="entry name" value="Amelogenin"/>
    <property type="match status" value="1"/>
</dbReference>
<dbReference type="PRINTS" id="PR01757">
    <property type="entry name" value="AMELOGENIN"/>
</dbReference>
<dbReference type="SMART" id="SM00818">
    <property type="entry name" value="Amelogenin"/>
    <property type="match status" value="1"/>
</dbReference>
<feature type="signal peptide" evidence="1">
    <location>
        <begin position="1"/>
        <end position="16"/>
    </location>
</feature>
<feature type="chain" id="PRO_0000001201" description="Amelogenin, X isoform">
    <location>
        <begin position="17"/>
        <end position="210"/>
    </location>
</feature>
<feature type="region of interest" description="Disordered" evidence="4">
    <location>
        <begin position="109"/>
        <end position="187"/>
    </location>
</feature>
<feature type="compositionally biased region" description="Low complexity" evidence="4">
    <location>
        <begin position="109"/>
        <end position="119"/>
    </location>
</feature>
<feature type="compositionally biased region" description="Low complexity" evidence="4">
    <location>
        <begin position="136"/>
        <end position="169"/>
    </location>
</feature>
<feature type="compositionally biased region" description="Pro residues" evidence="4">
    <location>
        <begin position="170"/>
        <end position="179"/>
    </location>
</feature>
<feature type="modified residue" description="Phosphoserine" evidence="2">
    <location>
        <position position="32"/>
    </location>
</feature>
<feature type="splice variant" id="VSP_011688" description="In isoform 1, isoform 2 and isoform 3." evidence="6">
    <location>
        <begin position="35"/>
        <end position="48"/>
    </location>
</feature>
<feature type="splice variant" id="VSP_000230" description="In isoform 2." evidence="7">
    <location>
        <begin position="64"/>
        <end position="184"/>
    </location>
</feature>
<feature type="splice variant" id="VSP_000231" description="In isoform 3." evidence="7">
    <location>
        <begin position="64"/>
        <end position="87"/>
    </location>
</feature>
<feature type="sequence conflict" description="In Ref. 6; AAA37218." evidence="7" ref="6">
    <original>P</original>
    <variation>A</variation>
    <location>
        <position position="111"/>
    </location>
</feature>
<reference key="1">
    <citation type="journal article" date="1992" name="Biochem. Biophys. Res. Commun.">
        <title>Alternative splicing of the mouse amelogenin primary RNA transcript contributes to amelogenin heterogeneity.</title>
        <authorList>
            <person name="Lau E.C."/>
            <person name="Simmer J.P."/>
            <person name="Bringas P. Jr."/>
            <person name="Hsu D.D.J."/>
            <person name="Hu C.C."/>
            <person name="Zeichner-David M."/>
            <person name="Thiemann F."/>
            <person name="Snead M.L."/>
            <person name="Slavkin H.C."/>
            <person name="Fincham A.G."/>
        </authorList>
    </citation>
    <scope>NUCLEOTIDE SEQUENCE (ISOFORMS 1; 2 AND 3)</scope>
    <source>
        <strain>ICR</strain>
    </source>
</reference>
<reference key="2">
    <citation type="submission" date="1994-06" db="EMBL/GenBank/DDBJ databases">
        <authorList>
            <person name="Oida S."/>
            <person name="Iimura T."/>
            <person name="Arai N."/>
            <person name="Takeda K."/>
            <person name="Maruoka Y."/>
            <person name="Terashima T."/>
            <person name="Shimokawa H."/>
            <person name="Sasaki S."/>
        </authorList>
    </citation>
    <scope>SEQUENCE REVISION TO 4</scope>
</reference>
<reference key="3">
    <citation type="journal article" date="1996" name="DNA Seq.">
        <title>Molecular structure of the mouse amelogenin genomic DNA.</title>
        <authorList>
            <person name="Oida S."/>
            <person name="Miyazaki H."/>
            <person name="Iimura T."/>
            <person name="Suzuki M."/>
            <person name="Sasaki M."/>
            <person name="Shimokawa H."/>
        </authorList>
    </citation>
    <scope>NUCLEOTIDE SEQUENCE [GENOMIC DNA] (ISOFORM 4)</scope>
</reference>
<reference key="4">
    <citation type="journal article" date="2005" name="Science">
        <title>The transcriptional landscape of the mammalian genome.</title>
        <authorList>
            <person name="Carninci P."/>
            <person name="Kasukawa T."/>
            <person name="Katayama S."/>
            <person name="Gough J."/>
            <person name="Frith M.C."/>
            <person name="Maeda N."/>
            <person name="Oyama R."/>
            <person name="Ravasi T."/>
            <person name="Lenhard B."/>
            <person name="Wells C."/>
            <person name="Kodzius R."/>
            <person name="Shimokawa K."/>
            <person name="Bajic V.B."/>
            <person name="Brenner S.E."/>
            <person name="Batalov S."/>
            <person name="Forrest A.R."/>
            <person name="Zavolan M."/>
            <person name="Davis M.J."/>
            <person name="Wilming L.G."/>
            <person name="Aidinis V."/>
            <person name="Allen J.E."/>
            <person name="Ambesi-Impiombato A."/>
            <person name="Apweiler R."/>
            <person name="Aturaliya R.N."/>
            <person name="Bailey T.L."/>
            <person name="Bansal M."/>
            <person name="Baxter L."/>
            <person name="Beisel K.W."/>
            <person name="Bersano T."/>
            <person name="Bono H."/>
            <person name="Chalk A.M."/>
            <person name="Chiu K.P."/>
            <person name="Choudhary V."/>
            <person name="Christoffels A."/>
            <person name="Clutterbuck D.R."/>
            <person name="Crowe M.L."/>
            <person name="Dalla E."/>
            <person name="Dalrymple B.P."/>
            <person name="de Bono B."/>
            <person name="Della Gatta G."/>
            <person name="di Bernardo D."/>
            <person name="Down T."/>
            <person name="Engstrom P."/>
            <person name="Fagiolini M."/>
            <person name="Faulkner G."/>
            <person name="Fletcher C.F."/>
            <person name="Fukushima T."/>
            <person name="Furuno M."/>
            <person name="Futaki S."/>
            <person name="Gariboldi M."/>
            <person name="Georgii-Hemming P."/>
            <person name="Gingeras T.R."/>
            <person name="Gojobori T."/>
            <person name="Green R.E."/>
            <person name="Gustincich S."/>
            <person name="Harbers M."/>
            <person name="Hayashi Y."/>
            <person name="Hensch T.K."/>
            <person name="Hirokawa N."/>
            <person name="Hill D."/>
            <person name="Huminiecki L."/>
            <person name="Iacono M."/>
            <person name="Ikeo K."/>
            <person name="Iwama A."/>
            <person name="Ishikawa T."/>
            <person name="Jakt M."/>
            <person name="Kanapin A."/>
            <person name="Katoh M."/>
            <person name="Kawasawa Y."/>
            <person name="Kelso J."/>
            <person name="Kitamura H."/>
            <person name="Kitano H."/>
            <person name="Kollias G."/>
            <person name="Krishnan S.P."/>
            <person name="Kruger A."/>
            <person name="Kummerfeld S.K."/>
            <person name="Kurochkin I.V."/>
            <person name="Lareau L.F."/>
            <person name="Lazarevic D."/>
            <person name="Lipovich L."/>
            <person name="Liu J."/>
            <person name="Liuni S."/>
            <person name="McWilliam S."/>
            <person name="Madan Babu M."/>
            <person name="Madera M."/>
            <person name="Marchionni L."/>
            <person name="Matsuda H."/>
            <person name="Matsuzawa S."/>
            <person name="Miki H."/>
            <person name="Mignone F."/>
            <person name="Miyake S."/>
            <person name="Morris K."/>
            <person name="Mottagui-Tabar S."/>
            <person name="Mulder N."/>
            <person name="Nakano N."/>
            <person name="Nakauchi H."/>
            <person name="Ng P."/>
            <person name="Nilsson R."/>
            <person name="Nishiguchi S."/>
            <person name="Nishikawa S."/>
            <person name="Nori F."/>
            <person name="Ohara O."/>
            <person name="Okazaki Y."/>
            <person name="Orlando V."/>
            <person name="Pang K.C."/>
            <person name="Pavan W.J."/>
            <person name="Pavesi G."/>
            <person name="Pesole G."/>
            <person name="Petrovsky N."/>
            <person name="Piazza S."/>
            <person name="Reed J."/>
            <person name="Reid J.F."/>
            <person name="Ring B.Z."/>
            <person name="Ringwald M."/>
            <person name="Rost B."/>
            <person name="Ruan Y."/>
            <person name="Salzberg S.L."/>
            <person name="Sandelin A."/>
            <person name="Schneider C."/>
            <person name="Schoenbach C."/>
            <person name="Sekiguchi K."/>
            <person name="Semple C.A."/>
            <person name="Seno S."/>
            <person name="Sessa L."/>
            <person name="Sheng Y."/>
            <person name="Shibata Y."/>
            <person name="Shimada H."/>
            <person name="Shimada K."/>
            <person name="Silva D."/>
            <person name="Sinclair B."/>
            <person name="Sperling S."/>
            <person name="Stupka E."/>
            <person name="Sugiura K."/>
            <person name="Sultana R."/>
            <person name="Takenaka Y."/>
            <person name="Taki K."/>
            <person name="Tammoja K."/>
            <person name="Tan S.L."/>
            <person name="Tang S."/>
            <person name="Taylor M.S."/>
            <person name="Tegner J."/>
            <person name="Teichmann S.A."/>
            <person name="Ueda H.R."/>
            <person name="van Nimwegen E."/>
            <person name="Verardo R."/>
            <person name="Wei C.L."/>
            <person name="Yagi K."/>
            <person name="Yamanishi H."/>
            <person name="Zabarovsky E."/>
            <person name="Zhu S."/>
            <person name="Zimmer A."/>
            <person name="Hide W."/>
            <person name="Bult C."/>
            <person name="Grimmond S.M."/>
            <person name="Teasdale R.D."/>
            <person name="Liu E.T."/>
            <person name="Brusic V."/>
            <person name="Quackenbush J."/>
            <person name="Wahlestedt C."/>
            <person name="Mattick J.S."/>
            <person name="Hume D.A."/>
            <person name="Kai C."/>
            <person name="Sasaki D."/>
            <person name="Tomaru Y."/>
            <person name="Fukuda S."/>
            <person name="Kanamori-Katayama M."/>
            <person name="Suzuki M."/>
            <person name="Aoki J."/>
            <person name="Arakawa T."/>
            <person name="Iida J."/>
            <person name="Imamura K."/>
            <person name="Itoh M."/>
            <person name="Kato T."/>
            <person name="Kawaji H."/>
            <person name="Kawagashira N."/>
            <person name="Kawashima T."/>
            <person name="Kojima M."/>
            <person name="Kondo S."/>
            <person name="Konno H."/>
            <person name="Nakano K."/>
            <person name="Ninomiya N."/>
            <person name="Nishio T."/>
            <person name="Okada M."/>
            <person name="Plessy C."/>
            <person name="Shibata K."/>
            <person name="Shiraki T."/>
            <person name="Suzuki S."/>
            <person name="Tagami M."/>
            <person name="Waki K."/>
            <person name="Watahiki A."/>
            <person name="Okamura-Oho Y."/>
            <person name="Suzuki H."/>
            <person name="Kawai J."/>
            <person name="Hayashizaki Y."/>
        </authorList>
    </citation>
    <scope>NUCLEOTIDE SEQUENCE [LARGE SCALE MRNA] (ISOFORM 1)</scope>
    <source>
        <strain>C57BL/6J</strain>
        <tissue>Head</tissue>
    </source>
</reference>
<reference key="5">
    <citation type="journal article" date="2009" name="PLoS Biol.">
        <title>Lineage-specific biology revealed by a finished genome assembly of the mouse.</title>
        <authorList>
            <person name="Church D.M."/>
            <person name="Goodstadt L."/>
            <person name="Hillier L.W."/>
            <person name="Zody M.C."/>
            <person name="Goldstein S."/>
            <person name="She X."/>
            <person name="Bult C.J."/>
            <person name="Agarwala R."/>
            <person name="Cherry J.L."/>
            <person name="DiCuccio M."/>
            <person name="Hlavina W."/>
            <person name="Kapustin Y."/>
            <person name="Meric P."/>
            <person name="Maglott D."/>
            <person name="Birtle Z."/>
            <person name="Marques A.C."/>
            <person name="Graves T."/>
            <person name="Zhou S."/>
            <person name="Teague B."/>
            <person name="Potamousis K."/>
            <person name="Churas C."/>
            <person name="Place M."/>
            <person name="Herschleb J."/>
            <person name="Runnheim R."/>
            <person name="Forrest D."/>
            <person name="Amos-Landgraf J."/>
            <person name="Schwartz D.C."/>
            <person name="Cheng Z."/>
            <person name="Lindblad-Toh K."/>
            <person name="Eichler E.E."/>
            <person name="Ponting C.P."/>
        </authorList>
    </citation>
    <scope>NUCLEOTIDE SEQUENCE [LARGE SCALE GENOMIC DNA]</scope>
    <source>
        <strain>C57BL/6J</strain>
    </source>
</reference>
<reference key="6">
    <citation type="journal article" date="1985" name="Biochem. Biophys. Res. Commun.">
        <title>DNA sequence for cloned cDNA for murine amelogenin reveal the amino acid sequence for enamel-specific protein.</title>
        <authorList>
            <person name="Snead M.L."/>
            <person name="Lau E.C."/>
            <person name="Zeichner-David M."/>
            <person name="Fincham A.G."/>
            <person name="Woo S.L."/>
            <person name="Slavkin H.C."/>
        </authorList>
    </citation>
    <scope>NUCLEOTIDE SEQUENCE [MRNA] OF 57-210</scope>
</reference>
<reference key="7">
    <citation type="journal article" date="2003" name="J. Biol. Chem.">
        <title>Amelogenin interacts with cytokeratin-5 in ameloblasts during enamel growth.</title>
        <authorList>
            <person name="Ravindranath R.M."/>
            <person name="Basilrose R.M. Sr."/>
            <person name="Ravindranath N.H."/>
            <person name="Vaitheesvaran B."/>
        </authorList>
    </citation>
    <scope>INTERACTION WITH KRT5</scope>
    <scope>DEVELOPMENTAL STAGE</scope>
</reference>
<name>AMELX_MOUSE</name>
<comment type="function">
    <text>Plays a role in the biomineralization of teeth. Seems to regulate the formation of crystallites during the secretory stage of tooth enamel development. Thought to play a major role in the structural organization and mineralization of developing enamel.</text>
</comment>
<comment type="subunit">
    <text evidence="5">Interacts with KRT5.</text>
</comment>
<comment type="subcellular location">
    <subcellularLocation>
        <location evidence="3">Secreted</location>
        <location evidence="3">Extracellular space</location>
        <location evidence="3">Extracellular matrix</location>
    </subcellularLocation>
</comment>
<comment type="alternative products">
    <event type="alternative splicing"/>
    <isoform>
        <id>P63277-4</id>
        <name>4</name>
        <sequence type="displayed"/>
    </isoform>
    <isoform>
        <id>P63277-1</id>
        <id>P45559-1</id>
        <name>1</name>
        <sequence type="described" ref="VSP_011688"/>
    </isoform>
    <isoform>
        <id>P63277-2</id>
        <id>P45559-2</id>
        <name>2</name>
        <name>LRAP</name>
        <sequence type="described" ref="VSP_011688 VSP_000230"/>
    </isoform>
    <isoform>
        <id>P63277-3</id>
        <id>P45559-3</id>
        <name>3</name>
        <sequence type="described" ref="VSP_011688 VSP_000231"/>
    </isoform>
    <text>Additional isoforms seem to exist.</text>
</comment>
<comment type="developmental stage">
    <text evidence="5">Expressed in ameloblasts at the periphery of mandibular molars at P1 (PubMed:12657653). At P3 also expressed at the molar incisal region (PubMed:12657653). Expressed at the terminal of Tomes' processes of ameloblasts at the incisal region at P5 (PubMed:12657653).</text>
</comment>
<comment type="PTM">
    <text>Several forms are produced by C-terminal processing.</text>
</comment>
<comment type="PTM">
    <text evidence="3">Phosphorylated by FAM20C in vitro.</text>
</comment>
<comment type="similarity">
    <text evidence="7">Belongs to the amelogenin family.</text>
</comment>